<sequence>MLSCTTSTMPGMICKNSDLEFDLLKPCFYPEEDDIYFGGHNSTPPGEDIWKKFELLPTPRLSPDSALAEHSLEPVNWATEMLLPEADLWSNPGEEEVFGQGGLRGCTSNPIILQDCMWSGFSNPGKPESVVSEKLPGGYRSLAVGAGTLAPGAAAAASSAGHERSGTAGVGRGKAAWLTELSHLDLECVDPAVVFFPANKREPMPVPTIPTSTGSAISLGDHQGLSSSLEDFLSNSGSVEEGGEEIYVVMLEETQFSKTVSRLPTAAHQENAALSPGCAQSSELILKRYDLIQEQHNYAAPPLPYVDREDARPQKKPRSHTSLALKCVFRPKAPRLGSRNNSDWENIERRRNHNRMERQRRDIMRSSFLNLRDLVPELVHNEKAAKVVILKKATEYIHTLQADESKLLVERKKLYERQQQLLQKIKQYALC</sequence>
<gene>
    <name type="primary">Mycs</name>
</gene>
<evidence type="ECO:0000250" key="1"/>
<evidence type="ECO:0000255" key="2">
    <source>
        <dbReference type="PROSITE-ProRule" id="PRU00981"/>
    </source>
</evidence>
<evidence type="ECO:0000305" key="3"/>
<feature type="chain" id="PRO_0000127341" description="Protein S-Myc">
    <location>
        <begin position="1"/>
        <end position="431"/>
    </location>
</feature>
<feature type="domain" description="bHLH" evidence="2">
    <location>
        <begin position="348"/>
        <end position="400"/>
    </location>
</feature>
<feature type="region of interest" description="Leucine-zipper">
    <location>
        <begin position="400"/>
        <end position="421"/>
    </location>
</feature>
<feature type="modified residue" description="Phosphotyrosine; by Tyr-kinases" evidence="1">
    <location>
        <position position="36"/>
    </location>
</feature>
<feature type="sequence conflict" description="In Ref. 1; BAA37155." evidence="3" ref="1">
    <original>N</original>
    <variation>K</variation>
    <location>
        <position position="340"/>
    </location>
</feature>
<feature type="sequence conflict" description="In Ref. 1; BAA37155." evidence="3" ref="1">
    <original>Q</original>
    <variation>P</variation>
    <location>
        <position position="427"/>
    </location>
</feature>
<proteinExistence type="evidence at transcript level"/>
<accession>Q9Z304</accession>
<accession>Q3V0Z1</accession>
<comment type="function">
    <text>Has apoptosis-inducing activity.</text>
</comment>
<comment type="subunit">
    <text>Efficient DNA binding requires dimerization with another bHLH protein.</text>
</comment>
<comment type="subcellular location">
    <subcellularLocation>
        <location evidence="2">Nucleus</location>
    </subcellularLocation>
</comment>
<name>MYCS_MOUSE</name>
<dbReference type="EMBL" id="AB016289">
    <property type="protein sequence ID" value="BAA37155.1"/>
    <property type="molecule type" value="Genomic_DNA"/>
</dbReference>
<dbReference type="EMBL" id="AK132789">
    <property type="protein sequence ID" value="BAE21362.1"/>
    <property type="molecule type" value="mRNA"/>
</dbReference>
<dbReference type="EMBL" id="BX465847">
    <property type="status" value="NOT_ANNOTATED_CDS"/>
    <property type="molecule type" value="Genomic_DNA"/>
</dbReference>
<dbReference type="EMBL" id="CH466841">
    <property type="protein sequence ID" value="EDL08935.1"/>
    <property type="molecule type" value="Genomic_DNA"/>
</dbReference>
<dbReference type="EMBL" id="BC117074">
    <property type="protein sequence ID" value="AAI17075.1"/>
    <property type="molecule type" value="mRNA"/>
</dbReference>
<dbReference type="EMBL" id="BC120777">
    <property type="protein sequence ID" value="AAI20778.1"/>
    <property type="molecule type" value="mRNA"/>
</dbReference>
<dbReference type="CCDS" id="CCDS29953.1"/>
<dbReference type="RefSeq" id="NP_034980.2">
    <property type="nucleotide sequence ID" value="NM_010850.2"/>
</dbReference>
<dbReference type="SMR" id="Q9Z304"/>
<dbReference type="FunCoup" id="Q9Z304">
    <property type="interactions" value="283"/>
</dbReference>
<dbReference type="STRING" id="10090.ENSMUSP00000054158"/>
<dbReference type="PaxDb" id="10090-ENSMUSP00000054158"/>
<dbReference type="DNASU" id="17870"/>
<dbReference type="Ensembl" id="ENSMUST00000058404.5">
    <property type="protein sequence ID" value="ENSMUSP00000054158.4"/>
    <property type="gene ID" value="ENSMUSG00000044597.5"/>
</dbReference>
<dbReference type="GeneID" id="17870"/>
<dbReference type="KEGG" id="mmu:17870"/>
<dbReference type="UCSC" id="uc009sks.2">
    <property type="organism name" value="mouse"/>
</dbReference>
<dbReference type="AGR" id="MGI:1332242"/>
<dbReference type="CTD" id="17870"/>
<dbReference type="MGI" id="MGI:1332242">
    <property type="gene designation" value="Mycs"/>
</dbReference>
<dbReference type="VEuPathDB" id="HostDB:ENSMUSG00000044597"/>
<dbReference type="eggNOG" id="KOG2588">
    <property type="taxonomic scope" value="Eukaryota"/>
</dbReference>
<dbReference type="GeneTree" id="ENSGT00940000158432"/>
<dbReference type="HOGENOM" id="CLU_052560_0_0_1"/>
<dbReference type="InParanoid" id="Q9Z304"/>
<dbReference type="OMA" id="GMICKNS"/>
<dbReference type="OrthoDB" id="5964374at2759"/>
<dbReference type="PhylomeDB" id="Q9Z304"/>
<dbReference type="TreeFam" id="TF106001"/>
<dbReference type="BioGRID-ORCS" id="17870">
    <property type="hits" value="3 hits in 79 CRISPR screens"/>
</dbReference>
<dbReference type="PRO" id="PR:Q9Z304"/>
<dbReference type="Proteomes" id="UP000000589">
    <property type="component" value="Chromosome X"/>
</dbReference>
<dbReference type="RNAct" id="Q9Z304">
    <property type="molecule type" value="protein"/>
</dbReference>
<dbReference type="Bgee" id="ENSMUSG00000044597">
    <property type="expression patterns" value="Expressed in mesodermal cell in embryo and 3 other cell types or tissues"/>
</dbReference>
<dbReference type="GO" id="GO:0005634">
    <property type="term" value="C:nucleus"/>
    <property type="evidence" value="ECO:0007669"/>
    <property type="project" value="UniProtKB-SubCell"/>
</dbReference>
<dbReference type="GO" id="GO:0003677">
    <property type="term" value="F:DNA binding"/>
    <property type="evidence" value="ECO:0007669"/>
    <property type="project" value="UniProtKB-KW"/>
</dbReference>
<dbReference type="GO" id="GO:0003700">
    <property type="term" value="F:DNA-binding transcription factor activity"/>
    <property type="evidence" value="ECO:0007669"/>
    <property type="project" value="InterPro"/>
</dbReference>
<dbReference type="GO" id="GO:0046983">
    <property type="term" value="F:protein dimerization activity"/>
    <property type="evidence" value="ECO:0007669"/>
    <property type="project" value="InterPro"/>
</dbReference>
<dbReference type="GO" id="GO:0006915">
    <property type="term" value="P:apoptotic process"/>
    <property type="evidence" value="ECO:0007669"/>
    <property type="project" value="UniProtKB-KW"/>
</dbReference>
<dbReference type="CDD" id="cd11456">
    <property type="entry name" value="bHLHzip_N-Myc_like"/>
    <property type="match status" value="1"/>
</dbReference>
<dbReference type="FunFam" id="4.10.280.10:FF:000019">
    <property type="entry name" value="Myc proto-oncogene protein"/>
    <property type="match status" value="1"/>
</dbReference>
<dbReference type="Gene3D" id="4.10.280.10">
    <property type="entry name" value="Helix-loop-helix DNA-binding domain"/>
    <property type="match status" value="1"/>
</dbReference>
<dbReference type="InterPro" id="IPR011598">
    <property type="entry name" value="bHLH_dom"/>
</dbReference>
<dbReference type="InterPro" id="IPR036638">
    <property type="entry name" value="HLH_DNA-bd_sf"/>
</dbReference>
<dbReference type="InterPro" id="IPR050433">
    <property type="entry name" value="Myc_transcription_factors"/>
</dbReference>
<dbReference type="InterPro" id="IPR002418">
    <property type="entry name" value="Tscrpt_reg_Myc"/>
</dbReference>
<dbReference type="InterPro" id="IPR012682">
    <property type="entry name" value="Tscrpt_reg_Myc_N"/>
</dbReference>
<dbReference type="PANTHER" id="PTHR45851">
    <property type="entry name" value="MYC PROTO-ONCOGENE"/>
    <property type="match status" value="1"/>
</dbReference>
<dbReference type="Pfam" id="PF00010">
    <property type="entry name" value="HLH"/>
    <property type="match status" value="1"/>
</dbReference>
<dbReference type="Pfam" id="PF01056">
    <property type="entry name" value="Myc_N"/>
    <property type="match status" value="1"/>
</dbReference>
<dbReference type="PIRSF" id="PIRSF001705">
    <property type="entry name" value="Myc_protein"/>
    <property type="match status" value="1"/>
</dbReference>
<dbReference type="PRINTS" id="PR00044">
    <property type="entry name" value="LEUZIPPRMYC"/>
</dbReference>
<dbReference type="SMART" id="SM00353">
    <property type="entry name" value="HLH"/>
    <property type="match status" value="1"/>
</dbReference>
<dbReference type="SUPFAM" id="SSF47459">
    <property type="entry name" value="HLH, helix-loop-helix DNA-binding domain"/>
    <property type="match status" value="1"/>
</dbReference>
<dbReference type="PROSITE" id="PS50888">
    <property type="entry name" value="BHLH"/>
    <property type="match status" value="1"/>
</dbReference>
<organism>
    <name type="scientific">Mus musculus</name>
    <name type="common">Mouse</name>
    <dbReference type="NCBI Taxonomy" id="10090"/>
    <lineage>
        <taxon>Eukaryota</taxon>
        <taxon>Metazoa</taxon>
        <taxon>Chordata</taxon>
        <taxon>Craniata</taxon>
        <taxon>Vertebrata</taxon>
        <taxon>Euteleostomi</taxon>
        <taxon>Mammalia</taxon>
        <taxon>Eutheria</taxon>
        <taxon>Euarchontoglires</taxon>
        <taxon>Glires</taxon>
        <taxon>Rodentia</taxon>
        <taxon>Myomorpha</taxon>
        <taxon>Muroidea</taxon>
        <taxon>Muridae</taxon>
        <taxon>Murinae</taxon>
        <taxon>Mus</taxon>
        <taxon>Mus</taxon>
    </lineage>
</organism>
<protein>
    <recommendedName>
        <fullName>Protein S-Myc</fullName>
    </recommendedName>
</protein>
<reference key="1">
    <citation type="journal article" date="1999" name="Gene">
        <title>Molecular cloning and chromosomal mapping of mouse intronless myc gene acting as a potent apoptosis inducer.</title>
        <authorList>
            <person name="Sugiyama A."/>
            <person name="Noguchi K."/>
            <person name="Kitanaka C."/>
            <person name="Katou N."/>
            <person name="Tashiro F."/>
            <person name="Ono T."/>
            <person name="Yoshida M.C."/>
            <person name="Kuchino Y."/>
        </authorList>
    </citation>
    <scope>NUCLEOTIDE SEQUENCE [GENOMIC DNA]</scope>
    <source>
        <strain>BALB/cJ</strain>
        <tissue>Liver</tissue>
    </source>
</reference>
<reference key="2">
    <citation type="journal article" date="2005" name="Science">
        <title>The transcriptional landscape of the mammalian genome.</title>
        <authorList>
            <person name="Carninci P."/>
            <person name="Kasukawa T."/>
            <person name="Katayama S."/>
            <person name="Gough J."/>
            <person name="Frith M.C."/>
            <person name="Maeda N."/>
            <person name="Oyama R."/>
            <person name="Ravasi T."/>
            <person name="Lenhard B."/>
            <person name="Wells C."/>
            <person name="Kodzius R."/>
            <person name="Shimokawa K."/>
            <person name="Bajic V.B."/>
            <person name="Brenner S.E."/>
            <person name="Batalov S."/>
            <person name="Forrest A.R."/>
            <person name="Zavolan M."/>
            <person name="Davis M.J."/>
            <person name="Wilming L.G."/>
            <person name="Aidinis V."/>
            <person name="Allen J.E."/>
            <person name="Ambesi-Impiombato A."/>
            <person name="Apweiler R."/>
            <person name="Aturaliya R.N."/>
            <person name="Bailey T.L."/>
            <person name="Bansal M."/>
            <person name="Baxter L."/>
            <person name="Beisel K.W."/>
            <person name="Bersano T."/>
            <person name="Bono H."/>
            <person name="Chalk A.M."/>
            <person name="Chiu K.P."/>
            <person name="Choudhary V."/>
            <person name="Christoffels A."/>
            <person name="Clutterbuck D.R."/>
            <person name="Crowe M.L."/>
            <person name="Dalla E."/>
            <person name="Dalrymple B.P."/>
            <person name="de Bono B."/>
            <person name="Della Gatta G."/>
            <person name="di Bernardo D."/>
            <person name="Down T."/>
            <person name="Engstrom P."/>
            <person name="Fagiolini M."/>
            <person name="Faulkner G."/>
            <person name="Fletcher C.F."/>
            <person name="Fukushima T."/>
            <person name="Furuno M."/>
            <person name="Futaki S."/>
            <person name="Gariboldi M."/>
            <person name="Georgii-Hemming P."/>
            <person name="Gingeras T.R."/>
            <person name="Gojobori T."/>
            <person name="Green R.E."/>
            <person name="Gustincich S."/>
            <person name="Harbers M."/>
            <person name="Hayashi Y."/>
            <person name="Hensch T.K."/>
            <person name="Hirokawa N."/>
            <person name="Hill D."/>
            <person name="Huminiecki L."/>
            <person name="Iacono M."/>
            <person name="Ikeo K."/>
            <person name="Iwama A."/>
            <person name="Ishikawa T."/>
            <person name="Jakt M."/>
            <person name="Kanapin A."/>
            <person name="Katoh M."/>
            <person name="Kawasawa Y."/>
            <person name="Kelso J."/>
            <person name="Kitamura H."/>
            <person name="Kitano H."/>
            <person name="Kollias G."/>
            <person name="Krishnan S.P."/>
            <person name="Kruger A."/>
            <person name="Kummerfeld S.K."/>
            <person name="Kurochkin I.V."/>
            <person name="Lareau L.F."/>
            <person name="Lazarevic D."/>
            <person name="Lipovich L."/>
            <person name="Liu J."/>
            <person name="Liuni S."/>
            <person name="McWilliam S."/>
            <person name="Madan Babu M."/>
            <person name="Madera M."/>
            <person name="Marchionni L."/>
            <person name="Matsuda H."/>
            <person name="Matsuzawa S."/>
            <person name="Miki H."/>
            <person name="Mignone F."/>
            <person name="Miyake S."/>
            <person name="Morris K."/>
            <person name="Mottagui-Tabar S."/>
            <person name="Mulder N."/>
            <person name="Nakano N."/>
            <person name="Nakauchi H."/>
            <person name="Ng P."/>
            <person name="Nilsson R."/>
            <person name="Nishiguchi S."/>
            <person name="Nishikawa S."/>
            <person name="Nori F."/>
            <person name="Ohara O."/>
            <person name="Okazaki Y."/>
            <person name="Orlando V."/>
            <person name="Pang K.C."/>
            <person name="Pavan W.J."/>
            <person name="Pavesi G."/>
            <person name="Pesole G."/>
            <person name="Petrovsky N."/>
            <person name="Piazza S."/>
            <person name="Reed J."/>
            <person name="Reid J.F."/>
            <person name="Ring B.Z."/>
            <person name="Ringwald M."/>
            <person name="Rost B."/>
            <person name="Ruan Y."/>
            <person name="Salzberg S.L."/>
            <person name="Sandelin A."/>
            <person name="Schneider C."/>
            <person name="Schoenbach C."/>
            <person name="Sekiguchi K."/>
            <person name="Semple C.A."/>
            <person name="Seno S."/>
            <person name="Sessa L."/>
            <person name="Sheng Y."/>
            <person name="Shibata Y."/>
            <person name="Shimada H."/>
            <person name="Shimada K."/>
            <person name="Silva D."/>
            <person name="Sinclair B."/>
            <person name="Sperling S."/>
            <person name="Stupka E."/>
            <person name="Sugiura K."/>
            <person name="Sultana R."/>
            <person name="Takenaka Y."/>
            <person name="Taki K."/>
            <person name="Tammoja K."/>
            <person name="Tan S.L."/>
            <person name="Tang S."/>
            <person name="Taylor M.S."/>
            <person name="Tegner J."/>
            <person name="Teichmann S.A."/>
            <person name="Ueda H.R."/>
            <person name="van Nimwegen E."/>
            <person name="Verardo R."/>
            <person name="Wei C.L."/>
            <person name="Yagi K."/>
            <person name="Yamanishi H."/>
            <person name="Zabarovsky E."/>
            <person name="Zhu S."/>
            <person name="Zimmer A."/>
            <person name="Hide W."/>
            <person name="Bult C."/>
            <person name="Grimmond S.M."/>
            <person name="Teasdale R.D."/>
            <person name="Liu E.T."/>
            <person name="Brusic V."/>
            <person name="Quackenbush J."/>
            <person name="Wahlestedt C."/>
            <person name="Mattick J.S."/>
            <person name="Hume D.A."/>
            <person name="Kai C."/>
            <person name="Sasaki D."/>
            <person name="Tomaru Y."/>
            <person name="Fukuda S."/>
            <person name="Kanamori-Katayama M."/>
            <person name="Suzuki M."/>
            <person name="Aoki J."/>
            <person name="Arakawa T."/>
            <person name="Iida J."/>
            <person name="Imamura K."/>
            <person name="Itoh M."/>
            <person name="Kato T."/>
            <person name="Kawaji H."/>
            <person name="Kawagashira N."/>
            <person name="Kawashima T."/>
            <person name="Kojima M."/>
            <person name="Kondo S."/>
            <person name="Konno H."/>
            <person name="Nakano K."/>
            <person name="Ninomiya N."/>
            <person name="Nishio T."/>
            <person name="Okada M."/>
            <person name="Plessy C."/>
            <person name="Shibata K."/>
            <person name="Shiraki T."/>
            <person name="Suzuki S."/>
            <person name="Tagami M."/>
            <person name="Waki K."/>
            <person name="Watahiki A."/>
            <person name="Okamura-Oho Y."/>
            <person name="Suzuki H."/>
            <person name="Kawai J."/>
            <person name="Hayashizaki Y."/>
        </authorList>
    </citation>
    <scope>NUCLEOTIDE SEQUENCE [LARGE SCALE MRNA]</scope>
    <source>
        <strain>C57BL/6J</strain>
        <tissue>Testis</tissue>
    </source>
</reference>
<reference key="3">
    <citation type="journal article" date="2009" name="PLoS Biol.">
        <title>Lineage-specific biology revealed by a finished genome assembly of the mouse.</title>
        <authorList>
            <person name="Church D.M."/>
            <person name="Goodstadt L."/>
            <person name="Hillier L.W."/>
            <person name="Zody M.C."/>
            <person name="Goldstein S."/>
            <person name="She X."/>
            <person name="Bult C.J."/>
            <person name="Agarwala R."/>
            <person name="Cherry J.L."/>
            <person name="DiCuccio M."/>
            <person name="Hlavina W."/>
            <person name="Kapustin Y."/>
            <person name="Meric P."/>
            <person name="Maglott D."/>
            <person name="Birtle Z."/>
            <person name="Marques A.C."/>
            <person name="Graves T."/>
            <person name="Zhou S."/>
            <person name="Teague B."/>
            <person name="Potamousis K."/>
            <person name="Churas C."/>
            <person name="Place M."/>
            <person name="Herschleb J."/>
            <person name="Runnheim R."/>
            <person name="Forrest D."/>
            <person name="Amos-Landgraf J."/>
            <person name="Schwartz D.C."/>
            <person name="Cheng Z."/>
            <person name="Lindblad-Toh K."/>
            <person name="Eichler E.E."/>
            <person name="Ponting C.P."/>
        </authorList>
    </citation>
    <scope>NUCLEOTIDE SEQUENCE [LARGE SCALE GENOMIC DNA]</scope>
    <source>
        <strain>C57BL/6J</strain>
    </source>
</reference>
<reference key="4">
    <citation type="submission" date="2005-07" db="EMBL/GenBank/DDBJ databases">
        <authorList>
            <person name="Mural R.J."/>
            <person name="Adams M.D."/>
            <person name="Myers E.W."/>
            <person name="Smith H.O."/>
            <person name="Venter J.C."/>
        </authorList>
    </citation>
    <scope>NUCLEOTIDE SEQUENCE [LARGE SCALE GENOMIC DNA]</scope>
</reference>
<reference key="5">
    <citation type="journal article" date="2004" name="Genome Res.">
        <title>The status, quality, and expansion of the NIH full-length cDNA project: the Mammalian Gene Collection (MGC).</title>
        <authorList>
            <consortium name="The MGC Project Team"/>
        </authorList>
    </citation>
    <scope>NUCLEOTIDE SEQUENCE [LARGE SCALE MRNA]</scope>
    <source>
        <tissue>Testis</tissue>
    </source>
</reference>
<keyword id="KW-0053">Apoptosis</keyword>
<keyword id="KW-0238">DNA-binding</keyword>
<keyword id="KW-0539">Nucleus</keyword>
<keyword id="KW-0597">Phosphoprotein</keyword>
<keyword id="KW-1185">Reference proteome</keyword>